<feature type="chain" id="PRO_1000089833" description="UPF0758 protein PputW619_0186">
    <location>
        <begin position="1"/>
        <end position="226"/>
    </location>
</feature>
<feature type="domain" description="MPN" evidence="1">
    <location>
        <begin position="102"/>
        <end position="224"/>
    </location>
</feature>
<feature type="short sequence motif" description="JAMM motif" evidence="1">
    <location>
        <begin position="173"/>
        <end position="186"/>
    </location>
</feature>
<feature type="binding site" evidence="1">
    <location>
        <position position="173"/>
    </location>
    <ligand>
        <name>Zn(2+)</name>
        <dbReference type="ChEBI" id="CHEBI:29105"/>
        <note>catalytic</note>
    </ligand>
</feature>
<feature type="binding site" evidence="1">
    <location>
        <position position="175"/>
    </location>
    <ligand>
        <name>Zn(2+)</name>
        <dbReference type="ChEBI" id="CHEBI:29105"/>
        <note>catalytic</note>
    </ligand>
</feature>
<feature type="binding site" evidence="1">
    <location>
        <position position="186"/>
    </location>
    <ligand>
        <name>Zn(2+)</name>
        <dbReference type="ChEBI" id="CHEBI:29105"/>
        <note>catalytic</note>
    </ligand>
</feature>
<dbReference type="EMBL" id="CP000949">
    <property type="protein sequence ID" value="ACA70692.1"/>
    <property type="molecule type" value="Genomic_DNA"/>
</dbReference>
<dbReference type="SMR" id="B1J4M1"/>
<dbReference type="STRING" id="390235.PputW619_0186"/>
<dbReference type="KEGG" id="ppw:PputW619_0186"/>
<dbReference type="eggNOG" id="COG2003">
    <property type="taxonomic scope" value="Bacteria"/>
</dbReference>
<dbReference type="HOGENOM" id="CLU_073529_0_1_6"/>
<dbReference type="OrthoDB" id="9804482at2"/>
<dbReference type="GO" id="GO:0046872">
    <property type="term" value="F:metal ion binding"/>
    <property type="evidence" value="ECO:0007669"/>
    <property type="project" value="UniProtKB-KW"/>
</dbReference>
<dbReference type="GO" id="GO:0008237">
    <property type="term" value="F:metallopeptidase activity"/>
    <property type="evidence" value="ECO:0007669"/>
    <property type="project" value="UniProtKB-KW"/>
</dbReference>
<dbReference type="GO" id="GO:0006508">
    <property type="term" value="P:proteolysis"/>
    <property type="evidence" value="ECO:0007669"/>
    <property type="project" value="UniProtKB-KW"/>
</dbReference>
<dbReference type="CDD" id="cd08071">
    <property type="entry name" value="MPN_DUF2466"/>
    <property type="match status" value="1"/>
</dbReference>
<dbReference type="Gene3D" id="3.40.140.10">
    <property type="entry name" value="Cytidine Deaminase, domain 2"/>
    <property type="match status" value="1"/>
</dbReference>
<dbReference type="InterPro" id="IPR037518">
    <property type="entry name" value="MPN"/>
</dbReference>
<dbReference type="InterPro" id="IPR025657">
    <property type="entry name" value="RadC_JAB"/>
</dbReference>
<dbReference type="InterPro" id="IPR010994">
    <property type="entry name" value="RuvA_2-like"/>
</dbReference>
<dbReference type="InterPro" id="IPR001405">
    <property type="entry name" value="UPF0758"/>
</dbReference>
<dbReference type="InterPro" id="IPR020891">
    <property type="entry name" value="UPF0758_CS"/>
</dbReference>
<dbReference type="InterPro" id="IPR046778">
    <property type="entry name" value="UPF0758_N"/>
</dbReference>
<dbReference type="NCBIfam" id="NF000642">
    <property type="entry name" value="PRK00024.1"/>
    <property type="match status" value="1"/>
</dbReference>
<dbReference type="NCBIfam" id="TIGR00608">
    <property type="entry name" value="radc"/>
    <property type="match status" value="1"/>
</dbReference>
<dbReference type="PANTHER" id="PTHR30471">
    <property type="entry name" value="DNA REPAIR PROTEIN RADC"/>
    <property type="match status" value="1"/>
</dbReference>
<dbReference type="PANTHER" id="PTHR30471:SF3">
    <property type="entry name" value="UPF0758 PROTEIN YEES-RELATED"/>
    <property type="match status" value="1"/>
</dbReference>
<dbReference type="Pfam" id="PF04002">
    <property type="entry name" value="RadC"/>
    <property type="match status" value="1"/>
</dbReference>
<dbReference type="Pfam" id="PF20582">
    <property type="entry name" value="UPF0758_N"/>
    <property type="match status" value="1"/>
</dbReference>
<dbReference type="SUPFAM" id="SSF102712">
    <property type="entry name" value="JAB1/MPN domain"/>
    <property type="match status" value="1"/>
</dbReference>
<dbReference type="SUPFAM" id="SSF47781">
    <property type="entry name" value="RuvA domain 2-like"/>
    <property type="match status" value="1"/>
</dbReference>
<dbReference type="PROSITE" id="PS50249">
    <property type="entry name" value="MPN"/>
    <property type="match status" value="1"/>
</dbReference>
<dbReference type="PROSITE" id="PS01302">
    <property type="entry name" value="UPF0758"/>
    <property type="match status" value="1"/>
</dbReference>
<gene>
    <name type="ordered locus">PputW619_0186</name>
</gene>
<reference key="1">
    <citation type="submission" date="2008-02" db="EMBL/GenBank/DDBJ databases">
        <title>Complete sequence of Pseudomonas putida W619.</title>
        <authorList>
            <person name="Copeland A."/>
            <person name="Lucas S."/>
            <person name="Lapidus A."/>
            <person name="Barry K."/>
            <person name="Detter J.C."/>
            <person name="Glavina del Rio T."/>
            <person name="Dalin E."/>
            <person name="Tice H."/>
            <person name="Pitluck S."/>
            <person name="Chain P."/>
            <person name="Malfatti S."/>
            <person name="Shin M."/>
            <person name="Vergez L."/>
            <person name="Schmutz J."/>
            <person name="Larimer F."/>
            <person name="Land M."/>
            <person name="Hauser L."/>
            <person name="Kyrpides N."/>
            <person name="Kim E."/>
            <person name="Taghavi S."/>
            <person name="Vangronsveld D."/>
            <person name="van der Lelie D."/>
            <person name="Richardson P."/>
        </authorList>
    </citation>
    <scope>NUCLEOTIDE SEQUENCE [LARGE SCALE GENOMIC DNA]</scope>
    <source>
        <strain>W619</strain>
    </source>
</reference>
<accession>B1J4M1</accession>
<protein>
    <recommendedName>
        <fullName>UPF0758 protein PputW619_0186</fullName>
    </recommendedName>
</protein>
<name>Y186_PSEPW</name>
<evidence type="ECO:0000255" key="1">
    <source>
        <dbReference type="PROSITE-ProRule" id="PRU01182"/>
    </source>
</evidence>
<evidence type="ECO:0000305" key="2"/>
<comment type="similarity">
    <text evidence="2">Belongs to the UPF0758 family.</text>
</comment>
<organism>
    <name type="scientific">Pseudomonas putida (strain W619)</name>
    <dbReference type="NCBI Taxonomy" id="390235"/>
    <lineage>
        <taxon>Bacteria</taxon>
        <taxon>Pseudomonadati</taxon>
        <taxon>Pseudomonadota</taxon>
        <taxon>Gammaproteobacteria</taxon>
        <taxon>Pseudomonadales</taxon>
        <taxon>Pseudomonadaceae</taxon>
        <taxon>Pseudomonas</taxon>
    </lineage>
</organism>
<proteinExistence type="inferred from homology"/>
<sequence length="226" mass="25093">MKISEWPAEERPREKLMQRGVGSLSDAELLAVFLGSGVRGRNVVELARGLLVKFGGLRQLLEADRDAFVGELGLGPVRYGQLQALLEIGRRNLATSIERDCALESPSAVRRYLKAMLRHEPSEVFGCLFLDSKHRPLAFEILFRGTIDRASIYPREVVRRSLMHNAAALILCHNHPSGNSEPSQDDVHMTLALKRGLALIDVRVLDHIIVGDGEPLSMVEQGWIVA</sequence>
<keyword id="KW-0378">Hydrolase</keyword>
<keyword id="KW-0479">Metal-binding</keyword>
<keyword id="KW-0482">Metalloprotease</keyword>
<keyword id="KW-0645">Protease</keyword>
<keyword id="KW-0862">Zinc</keyword>